<organism>
    <name type="scientific">Citrobacter koseri (strain ATCC BAA-895 / CDC 4225-83 / SGSC4696)</name>
    <dbReference type="NCBI Taxonomy" id="290338"/>
    <lineage>
        <taxon>Bacteria</taxon>
        <taxon>Pseudomonadati</taxon>
        <taxon>Pseudomonadota</taxon>
        <taxon>Gammaproteobacteria</taxon>
        <taxon>Enterobacterales</taxon>
        <taxon>Enterobacteriaceae</taxon>
        <taxon>Citrobacter</taxon>
    </lineage>
</organism>
<comment type="function">
    <text evidence="1">Joins adenosylcobinamide-GDP and alpha-ribazole to generate adenosylcobalamin (Ado-cobalamin). Also synthesizes adenosylcobalamin 5'-phosphate from adenosylcobinamide-GDP and alpha-ribazole 5'-phosphate.</text>
</comment>
<comment type="catalytic activity">
    <reaction evidence="1">
        <text>alpha-ribazole + adenosylcob(III)inamide-GDP = adenosylcob(III)alamin + GMP + H(+)</text>
        <dbReference type="Rhea" id="RHEA:16049"/>
        <dbReference type="ChEBI" id="CHEBI:10329"/>
        <dbReference type="ChEBI" id="CHEBI:15378"/>
        <dbReference type="ChEBI" id="CHEBI:18408"/>
        <dbReference type="ChEBI" id="CHEBI:58115"/>
        <dbReference type="ChEBI" id="CHEBI:60487"/>
        <dbReference type="EC" id="2.7.8.26"/>
    </reaction>
</comment>
<comment type="catalytic activity">
    <reaction evidence="1">
        <text>alpha-ribazole 5'-phosphate + adenosylcob(III)inamide-GDP = adenosylcob(III)alamin 5'-phosphate + GMP + H(+)</text>
        <dbReference type="Rhea" id="RHEA:23560"/>
        <dbReference type="ChEBI" id="CHEBI:15378"/>
        <dbReference type="ChEBI" id="CHEBI:57918"/>
        <dbReference type="ChEBI" id="CHEBI:58115"/>
        <dbReference type="ChEBI" id="CHEBI:60487"/>
        <dbReference type="ChEBI" id="CHEBI:60493"/>
        <dbReference type="EC" id="2.7.8.26"/>
    </reaction>
</comment>
<comment type="cofactor">
    <cofactor evidence="1">
        <name>Mg(2+)</name>
        <dbReference type="ChEBI" id="CHEBI:18420"/>
    </cofactor>
</comment>
<comment type="pathway">
    <text evidence="1">Cofactor biosynthesis; adenosylcobalamin biosynthesis; adenosylcobalamin from cob(II)yrinate a,c-diamide: step 7/7.</text>
</comment>
<comment type="subcellular location">
    <subcellularLocation>
        <location evidence="1">Cell inner membrane</location>
        <topology evidence="1">Multi-pass membrane protein</topology>
    </subcellularLocation>
</comment>
<comment type="similarity">
    <text evidence="1">Belongs to the CobS family.</text>
</comment>
<name>COBS_CITK8</name>
<protein>
    <recommendedName>
        <fullName evidence="1">Adenosylcobinamide-GDP ribazoletransferase</fullName>
        <ecNumber evidence="1">2.7.8.26</ecNumber>
    </recommendedName>
    <alternativeName>
        <fullName evidence="1">Cobalamin synthase</fullName>
    </alternativeName>
    <alternativeName>
        <fullName evidence="1">Cobalamin-5'-phosphate synthase</fullName>
    </alternativeName>
</protein>
<reference key="1">
    <citation type="submission" date="2007-08" db="EMBL/GenBank/DDBJ databases">
        <authorList>
            <consortium name="The Citrobacter koseri Genome Sequencing Project"/>
            <person name="McClelland M."/>
            <person name="Sanderson E.K."/>
            <person name="Porwollik S."/>
            <person name="Spieth J."/>
            <person name="Clifton W.S."/>
            <person name="Latreille P."/>
            <person name="Courtney L."/>
            <person name="Wang C."/>
            <person name="Pepin K."/>
            <person name="Bhonagiri V."/>
            <person name="Nash W."/>
            <person name="Johnson M."/>
            <person name="Thiruvilangam P."/>
            <person name="Wilson R."/>
        </authorList>
    </citation>
    <scope>NUCLEOTIDE SEQUENCE [LARGE SCALE GENOMIC DNA]</scope>
    <source>
        <strain>ATCC BAA-895 / CDC 4225-83 / SGSC4696</strain>
    </source>
</reference>
<evidence type="ECO:0000255" key="1">
    <source>
        <dbReference type="HAMAP-Rule" id="MF_00719"/>
    </source>
</evidence>
<gene>
    <name evidence="1" type="primary">cobS</name>
    <name type="ordered locus">CKO_00821</name>
</gene>
<keyword id="KW-0997">Cell inner membrane</keyword>
<keyword id="KW-1003">Cell membrane</keyword>
<keyword id="KW-0169">Cobalamin biosynthesis</keyword>
<keyword id="KW-0460">Magnesium</keyword>
<keyword id="KW-0472">Membrane</keyword>
<keyword id="KW-1185">Reference proteome</keyword>
<keyword id="KW-0808">Transferase</keyword>
<keyword id="KW-0812">Transmembrane</keyword>
<keyword id="KW-1133">Transmembrane helix</keyword>
<accession>A8AER0</accession>
<dbReference type="EC" id="2.7.8.26" evidence="1"/>
<dbReference type="EMBL" id="CP000822">
    <property type="protein sequence ID" value="ABV11973.1"/>
    <property type="molecule type" value="Genomic_DNA"/>
</dbReference>
<dbReference type="RefSeq" id="WP_012131794.1">
    <property type="nucleotide sequence ID" value="NC_009792.1"/>
</dbReference>
<dbReference type="STRING" id="290338.CKO_00821"/>
<dbReference type="GeneID" id="45135018"/>
<dbReference type="KEGG" id="cko:CKO_00821"/>
<dbReference type="HOGENOM" id="CLU_057426_1_1_6"/>
<dbReference type="OrthoDB" id="9794626at2"/>
<dbReference type="UniPathway" id="UPA00148">
    <property type="reaction ID" value="UER00238"/>
</dbReference>
<dbReference type="Proteomes" id="UP000008148">
    <property type="component" value="Chromosome"/>
</dbReference>
<dbReference type="GO" id="GO:0005886">
    <property type="term" value="C:plasma membrane"/>
    <property type="evidence" value="ECO:0007669"/>
    <property type="project" value="UniProtKB-SubCell"/>
</dbReference>
<dbReference type="GO" id="GO:0051073">
    <property type="term" value="F:adenosylcobinamide-GDP ribazoletransferase activity"/>
    <property type="evidence" value="ECO:0007669"/>
    <property type="project" value="UniProtKB-UniRule"/>
</dbReference>
<dbReference type="GO" id="GO:0008818">
    <property type="term" value="F:cobalamin 5'-phosphate synthase activity"/>
    <property type="evidence" value="ECO:0007669"/>
    <property type="project" value="UniProtKB-UniRule"/>
</dbReference>
<dbReference type="GO" id="GO:0009236">
    <property type="term" value="P:cobalamin biosynthetic process"/>
    <property type="evidence" value="ECO:0007669"/>
    <property type="project" value="UniProtKB-UniRule"/>
</dbReference>
<dbReference type="HAMAP" id="MF_00719">
    <property type="entry name" value="CobS"/>
    <property type="match status" value="1"/>
</dbReference>
<dbReference type="InterPro" id="IPR003805">
    <property type="entry name" value="CobS"/>
</dbReference>
<dbReference type="NCBIfam" id="TIGR00317">
    <property type="entry name" value="cobS"/>
    <property type="match status" value="1"/>
</dbReference>
<dbReference type="PANTHER" id="PTHR34148">
    <property type="entry name" value="ADENOSYLCOBINAMIDE-GDP RIBAZOLETRANSFERASE"/>
    <property type="match status" value="1"/>
</dbReference>
<dbReference type="PANTHER" id="PTHR34148:SF1">
    <property type="entry name" value="ADENOSYLCOBINAMIDE-GDP RIBAZOLETRANSFERASE"/>
    <property type="match status" value="1"/>
</dbReference>
<dbReference type="Pfam" id="PF02654">
    <property type="entry name" value="CobS"/>
    <property type="match status" value="1"/>
</dbReference>
<sequence>MSKLFWAMLAFISRLPVPTRWSQGLDFEEYSRGIVTFPLIGMLLGAIGGLVFVALQSWCGIPLAALFCVLTLALLTGGFHLDGLADTCDGIFSARRRERMLEIMRDSRLGTHGGLALIFVLLAKVLVISELALRGTPMLAALAMACAAGRGVAVLLMYRHRYAREEGLGNVFIGKVTGRQTCVTLGLTAILAAILMPGMHGVAALVVTLAAIFILGQLLKRTLGGQTGDTLGAAIELGELIFLLALL</sequence>
<feature type="chain" id="PRO_1000045763" description="Adenosylcobinamide-GDP ribazoletransferase">
    <location>
        <begin position="1"/>
        <end position="247"/>
    </location>
</feature>
<feature type="transmembrane region" description="Helical" evidence="1">
    <location>
        <begin position="34"/>
        <end position="54"/>
    </location>
</feature>
<feature type="transmembrane region" description="Helical" evidence="1">
    <location>
        <begin position="59"/>
        <end position="79"/>
    </location>
</feature>
<feature type="transmembrane region" description="Helical" evidence="1">
    <location>
        <begin position="113"/>
        <end position="133"/>
    </location>
</feature>
<feature type="transmembrane region" description="Helical" evidence="1">
    <location>
        <begin position="138"/>
        <end position="158"/>
    </location>
</feature>
<feature type="transmembrane region" description="Helical" evidence="1">
    <location>
        <begin position="171"/>
        <end position="193"/>
    </location>
</feature>
<feature type="transmembrane region" description="Helical" evidence="1">
    <location>
        <begin position="194"/>
        <end position="214"/>
    </location>
</feature>
<proteinExistence type="inferred from homology"/>